<keyword id="KW-0066">ATP synthesis</keyword>
<keyword id="KW-0139">CF(1)</keyword>
<keyword id="KW-0375">Hydrogen ion transport</keyword>
<keyword id="KW-0406">Ion transport</keyword>
<keyword id="KW-0472">Membrane</keyword>
<keyword id="KW-1185">Reference proteome</keyword>
<keyword id="KW-0793">Thylakoid</keyword>
<keyword id="KW-0813">Transport</keyword>
<organism>
    <name type="scientific">Synechococcus sp. (strain CC9311)</name>
    <dbReference type="NCBI Taxonomy" id="64471"/>
    <lineage>
        <taxon>Bacteria</taxon>
        <taxon>Bacillati</taxon>
        <taxon>Cyanobacteriota</taxon>
        <taxon>Cyanophyceae</taxon>
        <taxon>Synechococcales</taxon>
        <taxon>Synechococcaceae</taxon>
        <taxon>Synechococcus</taxon>
    </lineage>
</organism>
<dbReference type="EMBL" id="CP000435">
    <property type="protein sequence ID" value="ABI47660.1"/>
    <property type="molecule type" value="Genomic_DNA"/>
</dbReference>
<dbReference type="RefSeq" id="WP_011620223.1">
    <property type="nucleotide sequence ID" value="NC_008319.1"/>
</dbReference>
<dbReference type="SMR" id="Q0I7R1"/>
<dbReference type="STRING" id="64471.sync_2314"/>
<dbReference type="KEGG" id="syg:sync_2314"/>
<dbReference type="eggNOG" id="COG0712">
    <property type="taxonomic scope" value="Bacteria"/>
</dbReference>
<dbReference type="HOGENOM" id="CLU_085114_4_0_3"/>
<dbReference type="OrthoDB" id="9802471at2"/>
<dbReference type="Proteomes" id="UP000001961">
    <property type="component" value="Chromosome"/>
</dbReference>
<dbReference type="GO" id="GO:0031676">
    <property type="term" value="C:plasma membrane-derived thylakoid membrane"/>
    <property type="evidence" value="ECO:0007669"/>
    <property type="project" value="UniProtKB-SubCell"/>
</dbReference>
<dbReference type="GO" id="GO:0045259">
    <property type="term" value="C:proton-transporting ATP synthase complex"/>
    <property type="evidence" value="ECO:0007669"/>
    <property type="project" value="UniProtKB-KW"/>
</dbReference>
<dbReference type="GO" id="GO:0046933">
    <property type="term" value="F:proton-transporting ATP synthase activity, rotational mechanism"/>
    <property type="evidence" value="ECO:0007669"/>
    <property type="project" value="UniProtKB-UniRule"/>
</dbReference>
<dbReference type="Gene3D" id="1.10.520.20">
    <property type="entry name" value="N-terminal domain of the delta subunit of the F1F0-ATP synthase"/>
    <property type="match status" value="1"/>
</dbReference>
<dbReference type="HAMAP" id="MF_01416">
    <property type="entry name" value="ATP_synth_delta_bact"/>
    <property type="match status" value="1"/>
</dbReference>
<dbReference type="InterPro" id="IPR026015">
    <property type="entry name" value="ATP_synth_OSCP/delta_N_sf"/>
</dbReference>
<dbReference type="InterPro" id="IPR020781">
    <property type="entry name" value="ATPase_OSCP/d_CS"/>
</dbReference>
<dbReference type="InterPro" id="IPR000711">
    <property type="entry name" value="ATPase_OSCP/dsu"/>
</dbReference>
<dbReference type="NCBIfam" id="TIGR01145">
    <property type="entry name" value="ATP_synt_delta"/>
    <property type="match status" value="1"/>
</dbReference>
<dbReference type="PANTHER" id="PTHR11910">
    <property type="entry name" value="ATP SYNTHASE DELTA CHAIN"/>
    <property type="match status" value="1"/>
</dbReference>
<dbReference type="Pfam" id="PF00213">
    <property type="entry name" value="OSCP"/>
    <property type="match status" value="1"/>
</dbReference>
<dbReference type="PRINTS" id="PR00125">
    <property type="entry name" value="ATPASEDELTA"/>
</dbReference>
<dbReference type="SUPFAM" id="SSF47928">
    <property type="entry name" value="N-terminal domain of the delta subunit of the F1F0-ATP synthase"/>
    <property type="match status" value="1"/>
</dbReference>
<dbReference type="PROSITE" id="PS00389">
    <property type="entry name" value="ATPASE_DELTA"/>
    <property type="match status" value="1"/>
</dbReference>
<comment type="function">
    <text evidence="1">F(1)F(0) ATP synthase produces ATP from ADP in the presence of a proton or sodium gradient. F-type ATPases consist of two structural domains, F(1) containing the extramembraneous catalytic core and F(0) containing the membrane proton channel, linked together by a central stalk and a peripheral stalk. During catalysis, ATP synthesis in the catalytic domain of F(1) is coupled via a rotary mechanism of the central stalk subunits to proton translocation.</text>
</comment>
<comment type="function">
    <text evidence="1">This protein is part of the stalk that links CF(0) to CF(1). It either transmits conformational changes from CF(0) to CF(1) or is implicated in proton conduction.</text>
</comment>
<comment type="subunit">
    <text evidence="1">F-type ATPases have 2 components, F(1) - the catalytic core - and F(0) - the membrane proton channel. F(1) has five subunits: alpha(3), beta(3), gamma(1), delta(1), epsilon(1). CF(0) has four main subunits: a(1), b(1), b'(1) and c(10-14). The alpha and beta chains form an alternating ring which encloses part of the gamma chain. F(1) is attached to F(0) by a central stalk formed by the gamma and epsilon chains, while a peripheral stalk is formed by the delta, b and b' chains.</text>
</comment>
<comment type="subcellular location">
    <subcellularLocation>
        <location evidence="1">Cellular thylakoid membrane</location>
        <topology evidence="1">Peripheral membrane protein</topology>
    </subcellularLocation>
</comment>
<comment type="similarity">
    <text evidence="1">Belongs to the ATPase delta chain family.</text>
</comment>
<reference key="1">
    <citation type="journal article" date="2006" name="Proc. Natl. Acad. Sci. U.S.A.">
        <title>Genome sequence of Synechococcus CC9311: insights into adaptation to a coastal environment.</title>
        <authorList>
            <person name="Palenik B."/>
            <person name="Ren Q."/>
            <person name="Dupont C.L."/>
            <person name="Myers G.S."/>
            <person name="Heidelberg J.F."/>
            <person name="Badger J.H."/>
            <person name="Madupu R."/>
            <person name="Nelson W.C."/>
            <person name="Brinkac L.M."/>
            <person name="Dodson R.J."/>
            <person name="Durkin A.S."/>
            <person name="Daugherty S.C."/>
            <person name="Sullivan S.A."/>
            <person name="Khouri H."/>
            <person name="Mohamoud Y."/>
            <person name="Halpin R."/>
            <person name="Paulsen I.T."/>
        </authorList>
    </citation>
    <scope>NUCLEOTIDE SEQUENCE [LARGE SCALE GENOMIC DNA]</scope>
    <source>
        <strain>CC9311</strain>
    </source>
</reference>
<name>ATPD_SYNS3</name>
<evidence type="ECO:0000255" key="1">
    <source>
        <dbReference type="HAMAP-Rule" id="MF_01416"/>
    </source>
</evidence>
<gene>
    <name evidence="1" type="primary">atpH</name>
    <name evidence="1" type="synonym">atpD</name>
    <name type="ordered locus">sync_2314</name>
</gene>
<sequence>MPLLNSLATPYADALLQVTDVRQESEEVANQCKDLLSAWESSEPLRDAMTSPVLEPEAKKKALTSLLSEQVTPSLMNLLKVLADRQRLPALEAVLLRYLELYRESRNIALAHVRAAQPLTEEQQAALTTKVQSMAGTNAVEIDLKVDPSLIGGFVVNLGSQVIDASLSGQVRRLGLALAKAS</sequence>
<protein>
    <recommendedName>
        <fullName evidence="1">ATP synthase subunit delta</fullName>
    </recommendedName>
    <alternativeName>
        <fullName evidence="1">ATP synthase F(1) sector subunit delta</fullName>
    </alternativeName>
    <alternativeName>
        <fullName evidence="1">F-type ATPase subunit delta</fullName>
        <shortName evidence="1">F-ATPase subunit delta</shortName>
    </alternativeName>
</protein>
<accession>Q0I7R1</accession>
<feature type="chain" id="PRO_0000371175" description="ATP synthase subunit delta">
    <location>
        <begin position="1"/>
        <end position="182"/>
    </location>
</feature>
<proteinExistence type="inferred from homology"/>